<sequence length="247" mass="28677">MSILFIADVHLCNTKPKIIHGFLNFLYNHAMQAQALYILGDLFEVWLGDDEKNIMHMTIAKGLQSLHKKKVPCYFIRGNHDFLLGPKYANLCDMILLPDSQVLKLPSGKNVVILHGDTLCIDDKSYQRLRNFLHCQILQKIFLSLPLSMRLYIFNCARTFCIKYKKYKLKQNLHIKLQTVIDMLIKNQSKILIHGHTHQPAIHNIQISENISFKRIVLGQWNKYGSVATINEKNDDINLIHFPLNKQ</sequence>
<feature type="chain" id="PRO_0000214105" description="UDP-2,3-diacylglucosamine hydrolase">
    <location>
        <begin position="1"/>
        <end position="247"/>
    </location>
</feature>
<feature type="binding site" evidence="1">
    <location>
        <position position="8"/>
    </location>
    <ligand>
        <name>Mn(2+)</name>
        <dbReference type="ChEBI" id="CHEBI:29035"/>
        <label>1</label>
    </ligand>
</feature>
<feature type="binding site" evidence="1">
    <location>
        <position position="10"/>
    </location>
    <ligand>
        <name>Mn(2+)</name>
        <dbReference type="ChEBI" id="CHEBI:29035"/>
        <label>1</label>
    </ligand>
</feature>
<feature type="binding site" evidence="1">
    <location>
        <position position="41"/>
    </location>
    <ligand>
        <name>Mn(2+)</name>
        <dbReference type="ChEBI" id="CHEBI:29035"/>
        <label>1</label>
    </ligand>
</feature>
<feature type="binding site" evidence="1">
    <location>
        <position position="41"/>
    </location>
    <ligand>
        <name>Mn(2+)</name>
        <dbReference type="ChEBI" id="CHEBI:29035"/>
        <label>2</label>
    </ligand>
</feature>
<feature type="binding site" evidence="1">
    <location>
        <begin position="79"/>
        <end position="80"/>
    </location>
    <ligand>
        <name>substrate</name>
    </ligand>
</feature>
<feature type="binding site" evidence="1">
    <location>
        <position position="79"/>
    </location>
    <ligand>
        <name>Mn(2+)</name>
        <dbReference type="ChEBI" id="CHEBI:29035"/>
        <label>2</label>
    </ligand>
</feature>
<feature type="binding site" evidence="1">
    <location>
        <position position="115"/>
    </location>
    <ligand>
        <name>Mn(2+)</name>
        <dbReference type="ChEBI" id="CHEBI:29035"/>
        <label>2</label>
    </ligand>
</feature>
<feature type="binding site" evidence="1">
    <location>
        <position position="123"/>
    </location>
    <ligand>
        <name>substrate</name>
    </ligand>
</feature>
<feature type="binding site" evidence="1">
    <location>
        <position position="165"/>
    </location>
    <ligand>
        <name>substrate</name>
    </ligand>
</feature>
<feature type="binding site" evidence="1">
    <location>
        <position position="168"/>
    </location>
    <ligand>
        <name>substrate</name>
    </ligand>
</feature>
<feature type="binding site" evidence="1">
    <location>
        <position position="196"/>
    </location>
    <ligand>
        <name>Mn(2+)</name>
        <dbReference type="ChEBI" id="CHEBI:29035"/>
        <label>2</label>
    </ligand>
</feature>
<feature type="binding site" evidence="1">
    <location>
        <position position="196"/>
    </location>
    <ligand>
        <name>substrate</name>
    </ligand>
</feature>
<feature type="binding site" evidence="1">
    <location>
        <position position="198"/>
    </location>
    <ligand>
        <name>Mn(2+)</name>
        <dbReference type="ChEBI" id="CHEBI:29035"/>
        <label>1</label>
    </ligand>
</feature>
<evidence type="ECO:0000255" key="1">
    <source>
        <dbReference type="HAMAP-Rule" id="MF_00575"/>
    </source>
</evidence>
<proteinExistence type="inferred from homology"/>
<gene>
    <name evidence="1" type="primary">lpxH</name>
    <name type="ordered locus">Bfl303</name>
</gene>
<protein>
    <recommendedName>
        <fullName evidence="1">UDP-2,3-diacylglucosamine hydrolase</fullName>
        <ecNumber evidence="1">3.6.1.54</ecNumber>
    </recommendedName>
    <alternativeName>
        <fullName evidence="1">UDP-2,3-diacylglucosamine diphosphatase</fullName>
    </alternativeName>
</protein>
<accession>Q7VRB5</accession>
<organism>
    <name type="scientific">Blochmanniella floridana</name>
    <dbReference type="NCBI Taxonomy" id="203907"/>
    <lineage>
        <taxon>Bacteria</taxon>
        <taxon>Pseudomonadati</taxon>
        <taxon>Pseudomonadota</taxon>
        <taxon>Gammaproteobacteria</taxon>
        <taxon>Enterobacterales</taxon>
        <taxon>Enterobacteriaceae</taxon>
        <taxon>ant endosymbionts</taxon>
        <taxon>Candidatus Blochmanniella</taxon>
    </lineage>
</organism>
<keyword id="KW-0997">Cell inner membrane</keyword>
<keyword id="KW-1003">Cell membrane</keyword>
<keyword id="KW-0378">Hydrolase</keyword>
<keyword id="KW-0441">Lipid A biosynthesis</keyword>
<keyword id="KW-0444">Lipid biosynthesis</keyword>
<keyword id="KW-0443">Lipid metabolism</keyword>
<keyword id="KW-0464">Manganese</keyword>
<keyword id="KW-0472">Membrane</keyword>
<keyword id="KW-0479">Metal-binding</keyword>
<keyword id="KW-1185">Reference proteome</keyword>
<comment type="function">
    <text evidence="1">Hydrolyzes the pyrophosphate bond of UDP-2,3-diacylglucosamine to yield 2,3-diacylglucosamine 1-phosphate (lipid X) and UMP by catalyzing the attack of water at the alpha-P atom. Involved in the biosynthesis of lipid A, a phosphorylated glycolipid that anchors the lipopolysaccharide to the outer membrane of the cell.</text>
</comment>
<comment type="catalytic activity">
    <reaction evidence="1">
        <text>UDP-2-N,3-O-bis[(3R)-3-hydroxytetradecanoyl]-alpha-D-glucosamine + H2O = 2-N,3-O-bis[(3R)-3-hydroxytetradecanoyl]-alpha-D-glucosaminyl 1-phosphate + UMP + 2 H(+)</text>
        <dbReference type="Rhea" id="RHEA:25213"/>
        <dbReference type="ChEBI" id="CHEBI:15377"/>
        <dbReference type="ChEBI" id="CHEBI:15378"/>
        <dbReference type="ChEBI" id="CHEBI:57865"/>
        <dbReference type="ChEBI" id="CHEBI:57957"/>
        <dbReference type="ChEBI" id="CHEBI:78847"/>
        <dbReference type="EC" id="3.6.1.54"/>
    </reaction>
</comment>
<comment type="cofactor">
    <cofactor evidence="1">
        <name>Mn(2+)</name>
        <dbReference type="ChEBI" id="CHEBI:29035"/>
    </cofactor>
    <text evidence="1">Binds 2 Mn(2+) ions per subunit in a binuclear metal center.</text>
</comment>
<comment type="pathway">
    <text evidence="1">Glycolipid biosynthesis; lipid IV(A) biosynthesis; lipid IV(A) from (3R)-3-hydroxytetradecanoyl-[acyl-carrier-protein] and UDP-N-acetyl-alpha-D-glucosamine: step 4/6.</text>
</comment>
<comment type="subcellular location">
    <subcellularLocation>
        <location evidence="1">Cell inner membrane</location>
        <topology evidence="1">Peripheral membrane protein</topology>
        <orientation evidence="1">Cytoplasmic side</orientation>
    </subcellularLocation>
</comment>
<comment type="similarity">
    <text evidence="1">Belongs to the LpxH family.</text>
</comment>
<dbReference type="EC" id="3.6.1.54" evidence="1"/>
<dbReference type="EMBL" id="BX248583">
    <property type="protein sequence ID" value="CAD83374.1"/>
    <property type="molecule type" value="Genomic_DNA"/>
</dbReference>
<dbReference type="SMR" id="Q7VRB5"/>
<dbReference type="STRING" id="203907.Bfl303"/>
<dbReference type="KEGG" id="bfl:Bfl303"/>
<dbReference type="eggNOG" id="COG2908">
    <property type="taxonomic scope" value="Bacteria"/>
</dbReference>
<dbReference type="HOGENOM" id="CLU_074586_0_0_6"/>
<dbReference type="OrthoDB" id="9783283at2"/>
<dbReference type="UniPathway" id="UPA00359">
    <property type="reaction ID" value="UER00480"/>
</dbReference>
<dbReference type="Proteomes" id="UP000002192">
    <property type="component" value="Chromosome"/>
</dbReference>
<dbReference type="GO" id="GO:0005737">
    <property type="term" value="C:cytoplasm"/>
    <property type="evidence" value="ECO:0007669"/>
    <property type="project" value="InterPro"/>
</dbReference>
<dbReference type="GO" id="GO:0019897">
    <property type="term" value="C:extrinsic component of plasma membrane"/>
    <property type="evidence" value="ECO:0007669"/>
    <property type="project" value="UniProtKB-UniRule"/>
</dbReference>
<dbReference type="GO" id="GO:0030145">
    <property type="term" value="F:manganese ion binding"/>
    <property type="evidence" value="ECO:0007669"/>
    <property type="project" value="UniProtKB-UniRule"/>
</dbReference>
<dbReference type="GO" id="GO:0008758">
    <property type="term" value="F:UDP-2,3-diacylglucosamine hydrolase activity"/>
    <property type="evidence" value="ECO:0007669"/>
    <property type="project" value="UniProtKB-UniRule"/>
</dbReference>
<dbReference type="GO" id="GO:0009245">
    <property type="term" value="P:lipid A biosynthetic process"/>
    <property type="evidence" value="ECO:0007669"/>
    <property type="project" value="UniProtKB-UniRule"/>
</dbReference>
<dbReference type="CDD" id="cd07398">
    <property type="entry name" value="MPP_YbbF-LpxH"/>
    <property type="match status" value="1"/>
</dbReference>
<dbReference type="Gene3D" id="3.60.21.10">
    <property type="match status" value="1"/>
</dbReference>
<dbReference type="HAMAP" id="MF_00575">
    <property type="entry name" value="LpxH"/>
    <property type="match status" value="1"/>
</dbReference>
<dbReference type="InterPro" id="IPR004843">
    <property type="entry name" value="Calcineurin-like_PHP_ApaH"/>
</dbReference>
<dbReference type="InterPro" id="IPR043461">
    <property type="entry name" value="LpxH-like"/>
</dbReference>
<dbReference type="InterPro" id="IPR029052">
    <property type="entry name" value="Metallo-depent_PP-like"/>
</dbReference>
<dbReference type="InterPro" id="IPR010138">
    <property type="entry name" value="UDP-diacylglucosamine_Hdrlase"/>
</dbReference>
<dbReference type="NCBIfam" id="TIGR01854">
    <property type="entry name" value="lipid_A_lpxH"/>
    <property type="match status" value="1"/>
</dbReference>
<dbReference type="NCBIfam" id="NF003743">
    <property type="entry name" value="PRK05340.1"/>
    <property type="match status" value="1"/>
</dbReference>
<dbReference type="PANTHER" id="PTHR34990:SF1">
    <property type="entry name" value="UDP-2,3-DIACYLGLUCOSAMINE HYDROLASE"/>
    <property type="match status" value="1"/>
</dbReference>
<dbReference type="PANTHER" id="PTHR34990">
    <property type="entry name" value="UDP-2,3-DIACYLGLUCOSAMINE HYDROLASE-RELATED"/>
    <property type="match status" value="1"/>
</dbReference>
<dbReference type="Pfam" id="PF00149">
    <property type="entry name" value="Metallophos"/>
    <property type="match status" value="1"/>
</dbReference>
<dbReference type="SUPFAM" id="SSF56300">
    <property type="entry name" value="Metallo-dependent phosphatases"/>
    <property type="match status" value="1"/>
</dbReference>
<name>LPXH_BLOFL</name>
<reference key="1">
    <citation type="journal article" date="2003" name="Proc. Natl. Acad. Sci. U.S.A.">
        <title>The genome sequence of Blochmannia floridanus: comparative analysis of reduced genomes.</title>
        <authorList>
            <person name="Gil R."/>
            <person name="Silva F.J."/>
            <person name="Zientz E."/>
            <person name="Delmotte F."/>
            <person name="Gonzalez-Candelas F."/>
            <person name="Latorre A."/>
            <person name="Rausell C."/>
            <person name="Kamerbeek J."/>
            <person name="Gadau J."/>
            <person name="Hoelldobler B."/>
            <person name="van Ham R.C.H.J."/>
            <person name="Gross R."/>
            <person name="Moya A."/>
        </authorList>
    </citation>
    <scope>NUCLEOTIDE SEQUENCE [LARGE SCALE GENOMIC DNA]</scope>
</reference>